<accession>A9AEQ4</accession>
<gene>
    <name evidence="1" type="primary">rpoZ</name>
    <name type="ordered locus">Bmul_2400</name>
    <name type="ordered locus">BMULJ_00836</name>
</gene>
<name>RPOZ_BURM1</name>
<sequence>MARITVEDCLKQIPNRFELALAATYRARQLAQGHTPKIESRDKPTVVALREIAAGQVGLEMLKKVPV</sequence>
<evidence type="ECO:0000255" key="1">
    <source>
        <dbReference type="HAMAP-Rule" id="MF_00366"/>
    </source>
</evidence>
<organism>
    <name type="scientific">Burkholderia multivorans (strain ATCC 17616 / 249)</name>
    <dbReference type="NCBI Taxonomy" id="395019"/>
    <lineage>
        <taxon>Bacteria</taxon>
        <taxon>Pseudomonadati</taxon>
        <taxon>Pseudomonadota</taxon>
        <taxon>Betaproteobacteria</taxon>
        <taxon>Burkholderiales</taxon>
        <taxon>Burkholderiaceae</taxon>
        <taxon>Burkholderia</taxon>
        <taxon>Burkholderia cepacia complex</taxon>
    </lineage>
</organism>
<keyword id="KW-0240">DNA-directed RNA polymerase</keyword>
<keyword id="KW-0548">Nucleotidyltransferase</keyword>
<keyword id="KW-1185">Reference proteome</keyword>
<keyword id="KW-0804">Transcription</keyword>
<keyword id="KW-0808">Transferase</keyword>
<dbReference type="EC" id="2.7.7.6" evidence="1"/>
<dbReference type="EMBL" id="CP000868">
    <property type="protein sequence ID" value="ABX16085.1"/>
    <property type="molecule type" value="Genomic_DNA"/>
</dbReference>
<dbReference type="EMBL" id="AP009385">
    <property type="protein sequence ID" value="BAG42794.1"/>
    <property type="molecule type" value="Genomic_DNA"/>
</dbReference>
<dbReference type="RefSeq" id="WP_006400783.1">
    <property type="nucleotide sequence ID" value="NC_010804.1"/>
</dbReference>
<dbReference type="SMR" id="A9AEQ4"/>
<dbReference type="STRING" id="395019.BMULJ_00836"/>
<dbReference type="GeneID" id="89569269"/>
<dbReference type="KEGG" id="bmj:BMULJ_00836"/>
<dbReference type="KEGG" id="bmu:Bmul_2400"/>
<dbReference type="eggNOG" id="COG1758">
    <property type="taxonomic scope" value="Bacteria"/>
</dbReference>
<dbReference type="HOGENOM" id="CLU_125406_5_2_4"/>
<dbReference type="Proteomes" id="UP000008815">
    <property type="component" value="Chromosome 1"/>
</dbReference>
<dbReference type="GO" id="GO:0000428">
    <property type="term" value="C:DNA-directed RNA polymerase complex"/>
    <property type="evidence" value="ECO:0007669"/>
    <property type="project" value="UniProtKB-KW"/>
</dbReference>
<dbReference type="GO" id="GO:0003677">
    <property type="term" value="F:DNA binding"/>
    <property type="evidence" value="ECO:0007669"/>
    <property type="project" value="UniProtKB-UniRule"/>
</dbReference>
<dbReference type="GO" id="GO:0003899">
    <property type="term" value="F:DNA-directed RNA polymerase activity"/>
    <property type="evidence" value="ECO:0007669"/>
    <property type="project" value="UniProtKB-UniRule"/>
</dbReference>
<dbReference type="GO" id="GO:0006351">
    <property type="term" value="P:DNA-templated transcription"/>
    <property type="evidence" value="ECO:0007669"/>
    <property type="project" value="UniProtKB-UniRule"/>
</dbReference>
<dbReference type="Gene3D" id="3.90.940.10">
    <property type="match status" value="1"/>
</dbReference>
<dbReference type="HAMAP" id="MF_00366">
    <property type="entry name" value="RNApol_bact_RpoZ"/>
    <property type="match status" value="1"/>
</dbReference>
<dbReference type="InterPro" id="IPR003716">
    <property type="entry name" value="DNA-dir_RNA_pol_omega"/>
</dbReference>
<dbReference type="InterPro" id="IPR006110">
    <property type="entry name" value="Pol_omega/Rpo6/RPB6"/>
</dbReference>
<dbReference type="InterPro" id="IPR036161">
    <property type="entry name" value="RPB6/omega-like_sf"/>
</dbReference>
<dbReference type="NCBIfam" id="TIGR00690">
    <property type="entry name" value="rpoZ"/>
    <property type="match status" value="1"/>
</dbReference>
<dbReference type="PANTHER" id="PTHR34476">
    <property type="entry name" value="DNA-DIRECTED RNA POLYMERASE SUBUNIT OMEGA"/>
    <property type="match status" value="1"/>
</dbReference>
<dbReference type="PANTHER" id="PTHR34476:SF1">
    <property type="entry name" value="DNA-DIRECTED RNA POLYMERASE SUBUNIT OMEGA"/>
    <property type="match status" value="1"/>
</dbReference>
<dbReference type="Pfam" id="PF01192">
    <property type="entry name" value="RNA_pol_Rpb6"/>
    <property type="match status" value="1"/>
</dbReference>
<dbReference type="SMART" id="SM01409">
    <property type="entry name" value="RNA_pol_Rpb6"/>
    <property type="match status" value="1"/>
</dbReference>
<dbReference type="SUPFAM" id="SSF63562">
    <property type="entry name" value="RPB6/omega subunit-like"/>
    <property type="match status" value="1"/>
</dbReference>
<feature type="chain" id="PRO_1000121198" description="DNA-directed RNA polymerase subunit omega">
    <location>
        <begin position="1"/>
        <end position="67"/>
    </location>
</feature>
<reference key="1">
    <citation type="submission" date="2007-10" db="EMBL/GenBank/DDBJ databases">
        <title>Complete sequence of chromosome 1 of Burkholderia multivorans ATCC 17616.</title>
        <authorList>
            <person name="Copeland A."/>
            <person name="Lucas S."/>
            <person name="Lapidus A."/>
            <person name="Barry K."/>
            <person name="Glavina del Rio T."/>
            <person name="Dalin E."/>
            <person name="Tice H."/>
            <person name="Pitluck S."/>
            <person name="Chain P."/>
            <person name="Malfatti S."/>
            <person name="Shin M."/>
            <person name="Vergez L."/>
            <person name="Schmutz J."/>
            <person name="Larimer F."/>
            <person name="Land M."/>
            <person name="Hauser L."/>
            <person name="Kyrpides N."/>
            <person name="Kim E."/>
            <person name="Tiedje J."/>
            <person name="Richardson P."/>
        </authorList>
    </citation>
    <scope>NUCLEOTIDE SEQUENCE [LARGE SCALE GENOMIC DNA]</scope>
    <source>
        <strain>ATCC 17616 / 249</strain>
    </source>
</reference>
<reference key="2">
    <citation type="submission" date="2007-04" db="EMBL/GenBank/DDBJ databases">
        <title>Complete genome sequence of Burkholderia multivorans ATCC 17616.</title>
        <authorList>
            <person name="Ohtsubo Y."/>
            <person name="Yamashita A."/>
            <person name="Kurokawa K."/>
            <person name="Takami H."/>
            <person name="Yuhara S."/>
            <person name="Nishiyama E."/>
            <person name="Endo R."/>
            <person name="Miyazaki R."/>
            <person name="Ono A."/>
            <person name="Yano K."/>
            <person name="Ito M."/>
            <person name="Sota M."/>
            <person name="Yuji N."/>
            <person name="Hattori M."/>
            <person name="Tsuda M."/>
        </authorList>
    </citation>
    <scope>NUCLEOTIDE SEQUENCE [LARGE SCALE GENOMIC DNA]</scope>
    <source>
        <strain>ATCC 17616 / 249</strain>
    </source>
</reference>
<comment type="function">
    <text evidence="1">Promotes RNA polymerase assembly. Latches the N- and C-terminal regions of the beta' subunit thereby facilitating its interaction with the beta and alpha subunits.</text>
</comment>
<comment type="catalytic activity">
    <reaction evidence="1">
        <text>RNA(n) + a ribonucleoside 5'-triphosphate = RNA(n+1) + diphosphate</text>
        <dbReference type="Rhea" id="RHEA:21248"/>
        <dbReference type="Rhea" id="RHEA-COMP:14527"/>
        <dbReference type="Rhea" id="RHEA-COMP:17342"/>
        <dbReference type="ChEBI" id="CHEBI:33019"/>
        <dbReference type="ChEBI" id="CHEBI:61557"/>
        <dbReference type="ChEBI" id="CHEBI:140395"/>
        <dbReference type="EC" id="2.7.7.6"/>
    </reaction>
</comment>
<comment type="subunit">
    <text evidence="1">The RNAP catalytic core consists of 2 alpha, 1 beta, 1 beta' and 1 omega subunit. When a sigma factor is associated with the core the holoenzyme is formed, which can initiate transcription.</text>
</comment>
<comment type="similarity">
    <text evidence="1">Belongs to the RNA polymerase subunit omega family.</text>
</comment>
<protein>
    <recommendedName>
        <fullName evidence="1">DNA-directed RNA polymerase subunit omega</fullName>
        <shortName evidence="1">RNAP omega subunit</shortName>
        <ecNumber evidence="1">2.7.7.6</ecNumber>
    </recommendedName>
    <alternativeName>
        <fullName evidence="1">RNA polymerase omega subunit</fullName>
    </alternativeName>
    <alternativeName>
        <fullName evidence="1">Transcriptase subunit omega</fullName>
    </alternativeName>
</protein>
<proteinExistence type="inferred from homology"/>